<dbReference type="EMBL" id="AY155498">
    <property type="protein sequence ID" value="AAO16869.1"/>
    <property type="molecule type" value="Genomic_DNA"/>
</dbReference>
<protein>
    <recommendedName>
        <fullName evidence="4">Class I hydrophobin 3</fullName>
    </recommendedName>
</protein>
<comment type="function">
    <text evidence="3 6">Aerial growth, conidiation, and dispersal of filamentous fungi in the environment rely upon a capability of their secreting small amphipathic proteins called hydrophobins (HPBs) with low sequence identity. Class I can self-assemble into an outermost layer of rodlet bundles on aerial cell surfaces, conferring cellular hydrophobicity that supports fungal growth, development and dispersal; whereas Class II form highly ordered films at water-air interfaces through intermolecular interactions but contribute nothing to the rodlet structure (Probable). Does not seem to be important for the ability to cause seedling disease (PubMed:15288021).</text>
</comment>
<comment type="subcellular location">
    <subcellularLocation>
        <location evidence="6">Secreted</location>
    </subcellularLocation>
    <subcellularLocation>
        <location evidence="6">Secreted</location>
        <location evidence="6">Cell wall</location>
    </subcellularLocation>
</comment>
<comment type="disruption phenotype">
    <text evidence="3">Does not affect pathogenicity in a corn seedling infection assay nor the production of microconidia.</text>
</comment>
<comment type="similarity">
    <text evidence="5">Belongs to the fungal hydrophobin family.</text>
</comment>
<organism>
    <name type="scientific">Gibberella moniliformis</name>
    <name type="common">Maize ear and stalk rot fungus</name>
    <name type="synonym">Fusarium verticillioides</name>
    <dbReference type="NCBI Taxonomy" id="117187"/>
    <lineage>
        <taxon>Eukaryota</taxon>
        <taxon>Fungi</taxon>
        <taxon>Dikarya</taxon>
        <taxon>Ascomycota</taxon>
        <taxon>Pezizomycotina</taxon>
        <taxon>Sordariomycetes</taxon>
        <taxon>Hypocreomycetidae</taxon>
        <taxon>Hypocreales</taxon>
        <taxon>Nectriaceae</taxon>
        <taxon>Fusarium</taxon>
        <taxon>Fusarium fujikuroi species complex</taxon>
    </lineage>
</organism>
<feature type="signal peptide" evidence="2">
    <location>
        <begin position="1"/>
        <end position="18"/>
    </location>
</feature>
<feature type="chain" id="PRO_5043803053" description="Class I hydrophobin 3">
    <location>
        <begin position="19"/>
        <end position="96"/>
    </location>
</feature>
<feature type="disulfide bond" evidence="1">
    <location>
        <begin position="43"/>
        <end position="72"/>
    </location>
</feature>
<feature type="disulfide bond" evidence="1">
    <location>
        <begin position="51"/>
        <end position="66"/>
    </location>
</feature>
<feature type="disulfide bond" evidence="1">
    <location>
        <begin position="52"/>
        <end position="57"/>
    </location>
</feature>
<feature type="disulfide bond" evidence="1">
    <location>
        <begin position="73"/>
        <end position="92"/>
    </location>
</feature>
<keyword id="KW-0134">Cell wall</keyword>
<keyword id="KW-1015">Disulfide bond</keyword>
<keyword id="KW-0964">Secreted</keyword>
<keyword id="KW-0732">Signal</keyword>
<sequence length="96" mass="9504">MQFAKIASVLAMAAAAVAAPAPGNYEVEPRTGGSNNGNNQPACSAQSSNVCCNGLGCLVQILGAGCSTKSYCCQSDAPLAVGALVNVNALNCVQVL</sequence>
<proteinExistence type="inferred from homology"/>
<name>HYD3_GIBMO</name>
<accession>Q6YF30</accession>
<gene>
    <name evidence="4" type="primary">HYD3</name>
</gene>
<reference key="1">
    <citation type="journal article" date="2004" name="Fungal Genet. Biol.">
        <title>Five hydrophobin genes in Fusarium verticillioides include two required for microconidial chain formation.</title>
        <authorList>
            <person name="Fuchs U."/>
            <person name="Czymmek K.J."/>
            <person name="Sweigard J.A."/>
        </authorList>
    </citation>
    <scope>NUCLEOTIDE SEQUENCE [GENOMIC DNA]</scope>
    <scope>FUNCTION</scope>
    <scope>DISRUPTION PHENOTYPE</scope>
    <source>
        <strain>M-3125</strain>
    </source>
</reference>
<evidence type="ECO:0000250" key="1">
    <source>
        <dbReference type="UniProtKB" id="P52754"/>
    </source>
</evidence>
<evidence type="ECO:0000255" key="2"/>
<evidence type="ECO:0000269" key="3">
    <source>
    </source>
</evidence>
<evidence type="ECO:0000303" key="4">
    <source>
    </source>
</evidence>
<evidence type="ECO:0000305" key="5"/>
<evidence type="ECO:0000305" key="6">
    <source>
    </source>
</evidence>